<name>HPRK_BURTA</name>
<reference key="1">
    <citation type="journal article" date="2005" name="BMC Genomics">
        <title>Bacterial genome adaptation to niches: divergence of the potential virulence genes in three Burkholderia species of different survival strategies.</title>
        <authorList>
            <person name="Kim H.S."/>
            <person name="Schell M.A."/>
            <person name="Yu Y."/>
            <person name="Ulrich R.L."/>
            <person name="Sarria S.H."/>
            <person name="Nierman W.C."/>
            <person name="DeShazer D."/>
        </authorList>
    </citation>
    <scope>NUCLEOTIDE SEQUENCE [LARGE SCALE GENOMIC DNA]</scope>
    <source>
        <strain>ATCC 700388 / DSM 13276 / CCUG 48851 / CIP 106301 / E264</strain>
    </source>
</reference>
<evidence type="ECO:0000255" key="1">
    <source>
        <dbReference type="HAMAP-Rule" id="MF_01249"/>
    </source>
</evidence>
<proteinExistence type="inferred from homology"/>
<keyword id="KW-0067">ATP-binding</keyword>
<keyword id="KW-0418">Kinase</keyword>
<keyword id="KW-0460">Magnesium</keyword>
<keyword id="KW-0479">Metal-binding</keyword>
<keyword id="KW-0511">Multifunctional enzyme</keyword>
<keyword id="KW-0547">Nucleotide-binding</keyword>
<keyword id="KW-0723">Serine/threonine-protein kinase</keyword>
<keyword id="KW-0808">Transferase</keyword>
<sequence length="322" mass="35165">MDTSSINAQSIFDDNAAMLKLSWLTGHEGWERGFSADTVANATSSADLVGHLNLIHPNRIQVLGEAEIDYYQRQTDEDRSRHMAELIALEPPFLVVAGGAAAPPELVLRCTRSSTPLFTTPMSAAAVIDSLRLYMSRILAPRATLHGVFLDILGMGVLLTGDSGLGKSELGLELISRGHGLVADDAVDFVRLGPDFVEGRCPPLLQNLLEVRGLGLLDIKTIFGETAVRRKMKLKLIVQLVRRPDGEFQRLPLESQTVDVLGLPISKVTIQVAAGRNLAVLVEAAVRNTILQLRGIDTLRDFMDRQRLAMQDPDSQFPGKLV</sequence>
<protein>
    <recommendedName>
        <fullName evidence="1">HPr kinase/phosphorylase</fullName>
        <shortName evidence="1">HPrK/P</shortName>
        <ecNumber evidence="1">2.7.11.-</ecNumber>
        <ecNumber evidence="1">2.7.4.-</ecNumber>
    </recommendedName>
    <alternativeName>
        <fullName evidence="1">HPr(Ser) kinase/phosphorylase</fullName>
    </alternativeName>
</protein>
<dbReference type="EC" id="2.7.11.-" evidence="1"/>
<dbReference type="EC" id="2.7.4.-" evidence="1"/>
<dbReference type="EMBL" id="CP000086">
    <property type="protein sequence ID" value="ABC38667.1"/>
    <property type="molecule type" value="Genomic_DNA"/>
</dbReference>
<dbReference type="RefSeq" id="WP_004195225.1">
    <property type="nucleotide sequence ID" value="NZ_CP008785.1"/>
</dbReference>
<dbReference type="SMR" id="Q2T1A9"/>
<dbReference type="GeneID" id="93059051"/>
<dbReference type="KEGG" id="bte:BTH_I0483"/>
<dbReference type="HOGENOM" id="CLU_052030_0_2_4"/>
<dbReference type="Proteomes" id="UP000001930">
    <property type="component" value="Chromosome I"/>
</dbReference>
<dbReference type="GO" id="GO:0005524">
    <property type="term" value="F:ATP binding"/>
    <property type="evidence" value="ECO:0007669"/>
    <property type="project" value="UniProtKB-UniRule"/>
</dbReference>
<dbReference type="GO" id="GO:0000287">
    <property type="term" value="F:magnesium ion binding"/>
    <property type="evidence" value="ECO:0007669"/>
    <property type="project" value="UniProtKB-UniRule"/>
</dbReference>
<dbReference type="GO" id="GO:0000155">
    <property type="term" value="F:phosphorelay sensor kinase activity"/>
    <property type="evidence" value="ECO:0007669"/>
    <property type="project" value="InterPro"/>
</dbReference>
<dbReference type="GO" id="GO:0004674">
    <property type="term" value="F:protein serine/threonine kinase activity"/>
    <property type="evidence" value="ECO:0007669"/>
    <property type="project" value="UniProtKB-KW"/>
</dbReference>
<dbReference type="GO" id="GO:0004712">
    <property type="term" value="F:protein serine/threonine/tyrosine kinase activity"/>
    <property type="evidence" value="ECO:0007669"/>
    <property type="project" value="UniProtKB-UniRule"/>
</dbReference>
<dbReference type="GO" id="GO:0006109">
    <property type="term" value="P:regulation of carbohydrate metabolic process"/>
    <property type="evidence" value="ECO:0007669"/>
    <property type="project" value="UniProtKB-UniRule"/>
</dbReference>
<dbReference type="CDD" id="cd01918">
    <property type="entry name" value="HprK_C"/>
    <property type="match status" value="1"/>
</dbReference>
<dbReference type="FunFam" id="3.40.50.300:FF:000174">
    <property type="entry name" value="HPr kinase/phosphorylase"/>
    <property type="match status" value="1"/>
</dbReference>
<dbReference type="Gene3D" id="3.40.1390.20">
    <property type="entry name" value="HprK N-terminal domain-like"/>
    <property type="match status" value="1"/>
</dbReference>
<dbReference type="Gene3D" id="3.40.50.300">
    <property type="entry name" value="P-loop containing nucleotide triphosphate hydrolases"/>
    <property type="match status" value="1"/>
</dbReference>
<dbReference type="HAMAP" id="MF_01249">
    <property type="entry name" value="HPr_kinase"/>
    <property type="match status" value="1"/>
</dbReference>
<dbReference type="InterPro" id="IPR003755">
    <property type="entry name" value="HPr(Ser)_kin/Pase"/>
</dbReference>
<dbReference type="InterPro" id="IPR011104">
    <property type="entry name" value="Hpr_kin/Pase_C"/>
</dbReference>
<dbReference type="InterPro" id="IPR011126">
    <property type="entry name" value="Hpr_kin/Pase_Hpr_N"/>
</dbReference>
<dbReference type="InterPro" id="IPR027417">
    <property type="entry name" value="P-loop_NTPase"/>
</dbReference>
<dbReference type="InterPro" id="IPR028979">
    <property type="entry name" value="Ser_kin/Pase_Hpr-like_N_sf"/>
</dbReference>
<dbReference type="NCBIfam" id="TIGR00679">
    <property type="entry name" value="hpr-ser"/>
    <property type="match status" value="1"/>
</dbReference>
<dbReference type="PANTHER" id="PTHR30305:SF1">
    <property type="entry name" value="HPR KINASE_PHOSPHORYLASE"/>
    <property type="match status" value="1"/>
</dbReference>
<dbReference type="PANTHER" id="PTHR30305">
    <property type="entry name" value="PROTEIN YJDM-RELATED"/>
    <property type="match status" value="1"/>
</dbReference>
<dbReference type="Pfam" id="PF07475">
    <property type="entry name" value="Hpr_kinase_C"/>
    <property type="match status" value="1"/>
</dbReference>
<dbReference type="Pfam" id="PF02603">
    <property type="entry name" value="Hpr_kinase_N"/>
    <property type="match status" value="1"/>
</dbReference>
<dbReference type="SUPFAM" id="SSF75138">
    <property type="entry name" value="HprK N-terminal domain-like"/>
    <property type="match status" value="1"/>
</dbReference>
<dbReference type="SUPFAM" id="SSF53795">
    <property type="entry name" value="PEP carboxykinase-like"/>
    <property type="match status" value="1"/>
</dbReference>
<comment type="function">
    <text evidence="1">Catalyzes the ATP- as well as the pyrophosphate-dependent phosphorylation of a specific serine residue in HPr, a phosphocarrier protein of the phosphoenolpyruvate-dependent sugar phosphotransferase system (PTS). HprK/P also catalyzes the pyrophosphate-producing, inorganic phosphate-dependent dephosphorylation (phosphorolysis) of seryl-phosphorylated HPr (P-Ser-HPr).</text>
</comment>
<comment type="catalytic activity">
    <reaction evidence="1">
        <text>[HPr protein]-L-serine + ATP = [HPr protein]-O-phospho-L-serine + ADP + H(+)</text>
        <dbReference type="Rhea" id="RHEA:46600"/>
        <dbReference type="Rhea" id="RHEA-COMP:11602"/>
        <dbReference type="Rhea" id="RHEA-COMP:11603"/>
        <dbReference type="ChEBI" id="CHEBI:15378"/>
        <dbReference type="ChEBI" id="CHEBI:29999"/>
        <dbReference type="ChEBI" id="CHEBI:30616"/>
        <dbReference type="ChEBI" id="CHEBI:83421"/>
        <dbReference type="ChEBI" id="CHEBI:456216"/>
    </reaction>
</comment>
<comment type="catalytic activity">
    <reaction evidence="1">
        <text>[HPr protein]-O-phospho-L-serine + phosphate + H(+) = [HPr protein]-L-serine + diphosphate</text>
        <dbReference type="Rhea" id="RHEA:46604"/>
        <dbReference type="Rhea" id="RHEA-COMP:11602"/>
        <dbReference type="Rhea" id="RHEA-COMP:11603"/>
        <dbReference type="ChEBI" id="CHEBI:15378"/>
        <dbReference type="ChEBI" id="CHEBI:29999"/>
        <dbReference type="ChEBI" id="CHEBI:33019"/>
        <dbReference type="ChEBI" id="CHEBI:43474"/>
        <dbReference type="ChEBI" id="CHEBI:83421"/>
    </reaction>
</comment>
<comment type="cofactor">
    <cofactor evidence="1">
        <name>Mg(2+)</name>
        <dbReference type="ChEBI" id="CHEBI:18420"/>
    </cofactor>
</comment>
<comment type="subunit">
    <text evidence="1">Homohexamer.</text>
</comment>
<comment type="domain">
    <text evidence="1">The Walker A ATP-binding motif also binds Pi and PPi.</text>
</comment>
<comment type="miscellaneous">
    <text evidence="1">Both phosphorylation and phosphorolysis are carried out by the same active site and suggest a common mechanism for both reactions.</text>
</comment>
<comment type="similarity">
    <text evidence="1">Belongs to the HPrK/P family.</text>
</comment>
<gene>
    <name evidence="1" type="primary">hprK</name>
    <name type="ordered locus">BTH_I0483</name>
</gene>
<accession>Q2T1A9</accession>
<organism>
    <name type="scientific">Burkholderia thailandensis (strain ATCC 700388 / DSM 13276 / CCUG 48851 / CIP 106301 / E264)</name>
    <dbReference type="NCBI Taxonomy" id="271848"/>
    <lineage>
        <taxon>Bacteria</taxon>
        <taxon>Pseudomonadati</taxon>
        <taxon>Pseudomonadota</taxon>
        <taxon>Betaproteobacteria</taxon>
        <taxon>Burkholderiales</taxon>
        <taxon>Burkholderiaceae</taxon>
        <taxon>Burkholderia</taxon>
        <taxon>pseudomallei group</taxon>
    </lineage>
</organism>
<feature type="chain" id="PRO_1000067139" description="HPr kinase/phosphorylase">
    <location>
        <begin position="1"/>
        <end position="322"/>
    </location>
</feature>
<feature type="region of interest" description="Important for the catalytic mechanism of both phosphorylation and dephosphorylation" evidence="1">
    <location>
        <begin position="209"/>
        <end position="218"/>
    </location>
</feature>
<feature type="region of interest" description="Important for the catalytic mechanism of dephosphorylation" evidence="1">
    <location>
        <begin position="271"/>
        <end position="276"/>
    </location>
</feature>
<feature type="active site" evidence="1">
    <location>
        <position position="146"/>
    </location>
</feature>
<feature type="active site" evidence="1">
    <location>
        <position position="167"/>
    </location>
</feature>
<feature type="active site" description="Proton acceptor; for phosphorylation activity. Proton donor; for dephosphorylation activity" evidence="1">
    <location>
        <position position="185"/>
    </location>
</feature>
<feature type="active site" evidence="1">
    <location>
        <position position="250"/>
    </location>
</feature>
<feature type="binding site" evidence="1">
    <location>
        <begin position="161"/>
        <end position="168"/>
    </location>
    <ligand>
        <name>ATP</name>
        <dbReference type="ChEBI" id="CHEBI:30616"/>
    </ligand>
</feature>
<feature type="binding site" evidence="1">
    <location>
        <position position="168"/>
    </location>
    <ligand>
        <name>Mg(2+)</name>
        <dbReference type="ChEBI" id="CHEBI:18420"/>
    </ligand>
</feature>
<feature type="binding site" evidence="1">
    <location>
        <position position="210"/>
    </location>
    <ligand>
        <name>Mg(2+)</name>
        <dbReference type="ChEBI" id="CHEBI:18420"/>
    </ligand>
</feature>